<organism>
    <name type="scientific">Oryza sativa subsp. japonica</name>
    <name type="common">Rice</name>
    <dbReference type="NCBI Taxonomy" id="39947"/>
    <lineage>
        <taxon>Eukaryota</taxon>
        <taxon>Viridiplantae</taxon>
        <taxon>Streptophyta</taxon>
        <taxon>Embryophyta</taxon>
        <taxon>Tracheophyta</taxon>
        <taxon>Spermatophyta</taxon>
        <taxon>Magnoliopsida</taxon>
        <taxon>Liliopsida</taxon>
        <taxon>Poales</taxon>
        <taxon>Poaceae</taxon>
        <taxon>BOP clade</taxon>
        <taxon>Oryzoideae</taxon>
        <taxon>Oryzeae</taxon>
        <taxon>Oryzinae</taxon>
        <taxon>Oryza</taxon>
        <taxon>Oryza sativa</taxon>
    </lineage>
</organism>
<protein>
    <recommendedName>
        <fullName evidence="8">Transcription factor TGAL8</fullName>
    </recommendedName>
    <alternativeName>
        <fullName evidence="6">bZIP transcription factor 49</fullName>
        <shortName evidence="6">OsbZIP49</shortName>
    </alternativeName>
</protein>
<accession>Q69T21</accession>
<reference key="1">
    <citation type="journal article" date="2005" name="Nature">
        <title>The map-based sequence of the rice genome.</title>
        <authorList>
            <consortium name="International rice genome sequencing project (IRGSP)"/>
        </authorList>
    </citation>
    <scope>NUCLEOTIDE SEQUENCE [LARGE SCALE GENOMIC DNA]</scope>
    <source>
        <strain>cv. Nipponbare</strain>
    </source>
</reference>
<reference key="2">
    <citation type="journal article" date="2008" name="Nucleic Acids Res.">
        <title>The rice annotation project database (RAP-DB): 2008 update.</title>
        <authorList>
            <consortium name="The rice annotation project (RAP)"/>
        </authorList>
    </citation>
    <scope>GENOME REANNOTATION</scope>
    <source>
        <strain>cv. Nipponbare</strain>
    </source>
</reference>
<reference key="3">
    <citation type="journal article" date="2013" name="Rice">
        <title>Improvement of the Oryza sativa Nipponbare reference genome using next generation sequence and optical map data.</title>
        <authorList>
            <person name="Kawahara Y."/>
            <person name="de la Bastide M."/>
            <person name="Hamilton J.P."/>
            <person name="Kanamori H."/>
            <person name="McCombie W.R."/>
            <person name="Ouyang S."/>
            <person name="Schwartz D.C."/>
            <person name="Tanaka T."/>
            <person name="Wu J."/>
            <person name="Zhou S."/>
            <person name="Childs K.L."/>
            <person name="Davidson R.M."/>
            <person name="Lin H."/>
            <person name="Quesada-Ocampo L."/>
            <person name="Vaillancourt B."/>
            <person name="Sakai H."/>
            <person name="Lee S.S."/>
            <person name="Kim J."/>
            <person name="Numa H."/>
            <person name="Itoh T."/>
            <person name="Buell C.R."/>
            <person name="Matsumoto T."/>
        </authorList>
    </citation>
    <scope>GENOME REANNOTATION</scope>
    <source>
        <strain>cv. Nipponbare</strain>
    </source>
</reference>
<reference key="4">
    <citation type="journal article" date="2005" name="PLoS Biol.">
        <title>The genomes of Oryza sativa: a history of duplications.</title>
        <authorList>
            <person name="Yu J."/>
            <person name="Wang J."/>
            <person name="Lin W."/>
            <person name="Li S."/>
            <person name="Li H."/>
            <person name="Zhou J."/>
            <person name="Ni P."/>
            <person name="Dong W."/>
            <person name="Hu S."/>
            <person name="Zeng C."/>
            <person name="Zhang J."/>
            <person name="Zhang Y."/>
            <person name="Li R."/>
            <person name="Xu Z."/>
            <person name="Li S."/>
            <person name="Li X."/>
            <person name="Zheng H."/>
            <person name="Cong L."/>
            <person name="Lin L."/>
            <person name="Yin J."/>
            <person name="Geng J."/>
            <person name="Li G."/>
            <person name="Shi J."/>
            <person name="Liu J."/>
            <person name="Lv H."/>
            <person name="Li J."/>
            <person name="Wang J."/>
            <person name="Deng Y."/>
            <person name="Ran L."/>
            <person name="Shi X."/>
            <person name="Wang X."/>
            <person name="Wu Q."/>
            <person name="Li C."/>
            <person name="Ren X."/>
            <person name="Wang J."/>
            <person name="Wang X."/>
            <person name="Li D."/>
            <person name="Liu D."/>
            <person name="Zhang X."/>
            <person name="Ji Z."/>
            <person name="Zhao W."/>
            <person name="Sun Y."/>
            <person name="Zhang Z."/>
            <person name="Bao J."/>
            <person name="Han Y."/>
            <person name="Dong L."/>
            <person name="Ji J."/>
            <person name="Chen P."/>
            <person name="Wu S."/>
            <person name="Liu J."/>
            <person name="Xiao Y."/>
            <person name="Bu D."/>
            <person name="Tan J."/>
            <person name="Yang L."/>
            <person name="Ye C."/>
            <person name="Zhang J."/>
            <person name="Xu J."/>
            <person name="Zhou Y."/>
            <person name="Yu Y."/>
            <person name="Zhang B."/>
            <person name="Zhuang S."/>
            <person name="Wei H."/>
            <person name="Liu B."/>
            <person name="Lei M."/>
            <person name="Yu H."/>
            <person name="Li Y."/>
            <person name="Xu H."/>
            <person name="Wei S."/>
            <person name="He X."/>
            <person name="Fang L."/>
            <person name="Zhang Z."/>
            <person name="Zhang Y."/>
            <person name="Huang X."/>
            <person name="Su Z."/>
            <person name="Tong W."/>
            <person name="Li J."/>
            <person name="Tong Z."/>
            <person name="Li S."/>
            <person name="Ye J."/>
            <person name="Wang L."/>
            <person name="Fang L."/>
            <person name="Lei T."/>
            <person name="Chen C.-S."/>
            <person name="Chen H.-C."/>
            <person name="Xu Z."/>
            <person name="Li H."/>
            <person name="Huang H."/>
            <person name="Zhang F."/>
            <person name="Xu H."/>
            <person name="Li N."/>
            <person name="Zhao C."/>
            <person name="Li S."/>
            <person name="Dong L."/>
            <person name="Huang Y."/>
            <person name="Li L."/>
            <person name="Xi Y."/>
            <person name="Qi Q."/>
            <person name="Li W."/>
            <person name="Zhang B."/>
            <person name="Hu W."/>
            <person name="Zhang Y."/>
            <person name="Tian X."/>
            <person name="Jiao Y."/>
            <person name="Liang X."/>
            <person name="Jin J."/>
            <person name="Gao L."/>
            <person name="Zheng W."/>
            <person name="Hao B."/>
            <person name="Liu S.-M."/>
            <person name="Wang W."/>
            <person name="Yuan L."/>
            <person name="Cao M."/>
            <person name="McDermott J."/>
            <person name="Samudrala R."/>
            <person name="Wang J."/>
            <person name="Wong G.K.-S."/>
            <person name="Yang H."/>
        </authorList>
    </citation>
    <scope>NUCLEOTIDE SEQUENCE [LARGE SCALE GENOMIC DNA]</scope>
    <source>
        <strain>cv. Nipponbare</strain>
    </source>
</reference>
<reference key="5">
    <citation type="journal article" date="2003" name="Science">
        <title>Collection, mapping, and annotation of over 28,000 cDNA clones from japonica rice.</title>
        <authorList>
            <consortium name="The rice full-length cDNA consortium"/>
        </authorList>
    </citation>
    <scope>NUCLEOTIDE SEQUENCE [LARGE SCALE MRNA]</scope>
    <source>
        <strain>cv. Nipponbare</strain>
    </source>
</reference>
<reference key="6">
    <citation type="journal article" date="2008" name="Plant Physiol.">
        <title>Genomic survey and gene expression analysis of the basic leucine zipper transcription factor family in rice.</title>
        <authorList>
            <person name="Nijhawan A."/>
            <person name="Jain M."/>
            <person name="Tyagi A.K."/>
            <person name="Khurana J.P."/>
        </authorList>
    </citation>
    <scope>GENE FAMILY</scope>
    <scope>NOMENCLATURE</scope>
</reference>
<reference key="7">
    <citation type="journal article" date="2014" name="BMC Genomics">
        <title>Interaction specificity and coexpression of rice NPR1 homologs 1 and 3 (NH1 and NH3), TGA transcription factors and negative regulator of resistance (NRR) proteins.</title>
        <authorList>
            <person name="Chern M."/>
            <person name="Bai W."/>
            <person name="Ruan D."/>
            <person name="Oh T."/>
            <person name="Chen X."/>
            <person name="Ronald P.C."/>
        </authorList>
    </citation>
    <scope>INTERACTION WITH NPR5/NH4; NH5.1 AND NH5.2</scope>
</reference>
<proteinExistence type="evidence at protein level"/>
<sequence>MAYPSTSGMIQASSSLHGSITRRNPEGYDMPSDLDQALLLYFDGQEQDKPSTQEEPHKPLNFVKETLNIFPSQPMDGEPTPTPKASMSAPPIAGFSRRSPAPAAADGRPLTLGKTSKAAFKKEGGSGSGGAMAASASSELKGPKTPDPKTLRRLAQNREAARKSRLRKKAYIQQLETGRIRLAHLEQEIQFTRAQGAFCGAGILSPDAALFNLEYERWQEAHHQVISRLRAAVEEHRPDGELQPHVDEAMSHYGVLMAHKARLVGADPLHLLSGLWKGAVEQCFLWIGGFRPSELIKVVVRHVEPLTEQQLAAVYSAQQAARQEEDALDGGLQALLRSLSDVVSSSDAPSSSQQTPPVMYHPSAAAAMAAASFMGQYGSYSNLQLAMDKLANLAIFLRQADEERMRTLHALRRMLTVRQAARCFVAVDDYFGRLRALALFWTTTRPHPAAG</sequence>
<comment type="function">
    <text evidence="1">Transcriptional regulator involved in defense response.</text>
</comment>
<comment type="subunit">
    <text evidence="5">Interacts with NPR5/NH4, NH5.1 and NH5.2.</text>
</comment>
<comment type="subcellular location">
    <subcellularLocation>
        <location evidence="2">Nucleus</location>
    </subcellularLocation>
</comment>
<comment type="similarity">
    <text evidence="8">Belongs to the bZIP family.</text>
</comment>
<dbReference type="EMBL" id="AP003711">
    <property type="protein sequence ID" value="BAD35566.1"/>
    <property type="molecule type" value="Genomic_DNA"/>
</dbReference>
<dbReference type="EMBL" id="AP004781">
    <property type="protein sequence ID" value="BAD35911.1"/>
    <property type="molecule type" value="Genomic_DNA"/>
</dbReference>
<dbReference type="EMBL" id="AP008212">
    <property type="protein sequence ID" value="BAF19990.1"/>
    <property type="molecule type" value="Genomic_DNA"/>
</dbReference>
<dbReference type="EMBL" id="AP014962">
    <property type="protein sequence ID" value="BAS98620.1"/>
    <property type="molecule type" value="Genomic_DNA"/>
</dbReference>
<dbReference type="EMBL" id="CM000143">
    <property type="protein sequence ID" value="EEE66012.1"/>
    <property type="molecule type" value="Genomic_DNA"/>
</dbReference>
<dbReference type="EMBL" id="AK119909">
    <property type="protein sequence ID" value="BAG99807.1"/>
    <property type="molecule type" value="mRNA"/>
</dbReference>
<dbReference type="RefSeq" id="XP_015644001.1">
    <property type="nucleotide sequence ID" value="XM_015788515.1"/>
</dbReference>
<dbReference type="SMR" id="Q69T21"/>
<dbReference type="STRING" id="39947.Q69T21"/>
<dbReference type="PaxDb" id="39947-Q69T21"/>
<dbReference type="EnsemblPlants" id="Os06t0614100-01">
    <property type="protein sequence ID" value="Os06t0614100-01"/>
    <property type="gene ID" value="Os06g0614100"/>
</dbReference>
<dbReference type="Gramene" id="Os06t0614100-01">
    <property type="protein sequence ID" value="Os06t0614100-01"/>
    <property type="gene ID" value="Os06g0614100"/>
</dbReference>
<dbReference type="KEGG" id="dosa:Os06g0614100"/>
<dbReference type="eggNOG" id="ENOG502QRKF">
    <property type="taxonomic scope" value="Eukaryota"/>
</dbReference>
<dbReference type="HOGENOM" id="CLU_024782_0_2_1"/>
<dbReference type="InParanoid" id="Q69T21"/>
<dbReference type="OMA" id="ASFMGQY"/>
<dbReference type="OrthoDB" id="654940at2759"/>
<dbReference type="Proteomes" id="UP000000763">
    <property type="component" value="Chromosome 6"/>
</dbReference>
<dbReference type="Proteomes" id="UP000007752">
    <property type="component" value="Chromosome 6"/>
</dbReference>
<dbReference type="Proteomes" id="UP000059680">
    <property type="component" value="Chromosome 6"/>
</dbReference>
<dbReference type="GO" id="GO:0005634">
    <property type="term" value="C:nucleus"/>
    <property type="evidence" value="ECO:0007669"/>
    <property type="project" value="UniProtKB-SubCell"/>
</dbReference>
<dbReference type="GO" id="GO:0003700">
    <property type="term" value="F:DNA-binding transcription factor activity"/>
    <property type="evidence" value="ECO:0007669"/>
    <property type="project" value="InterPro"/>
</dbReference>
<dbReference type="GO" id="GO:0043565">
    <property type="term" value="F:sequence-specific DNA binding"/>
    <property type="evidence" value="ECO:0007669"/>
    <property type="project" value="InterPro"/>
</dbReference>
<dbReference type="GO" id="GO:0006952">
    <property type="term" value="P:defense response"/>
    <property type="evidence" value="ECO:0007669"/>
    <property type="project" value="UniProtKB-KW"/>
</dbReference>
<dbReference type="GO" id="GO:0006351">
    <property type="term" value="P:DNA-templated transcription"/>
    <property type="evidence" value="ECO:0007669"/>
    <property type="project" value="InterPro"/>
</dbReference>
<dbReference type="FunFam" id="1.20.5.170:FF:000019">
    <property type="entry name" value="BZIP family transcription factor"/>
    <property type="match status" value="1"/>
</dbReference>
<dbReference type="Gene3D" id="1.20.5.170">
    <property type="match status" value="1"/>
</dbReference>
<dbReference type="InterPro" id="IPR004827">
    <property type="entry name" value="bZIP"/>
</dbReference>
<dbReference type="InterPro" id="IPR046347">
    <property type="entry name" value="bZIP_sf"/>
</dbReference>
<dbReference type="InterPro" id="IPR025422">
    <property type="entry name" value="TGA_domain"/>
</dbReference>
<dbReference type="PANTHER" id="PTHR45693">
    <property type="entry name" value="TRANSCRIPTION FACTOR TGA9"/>
    <property type="match status" value="1"/>
</dbReference>
<dbReference type="PANTHER" id="PTHR45693:SF3">
    <property type="entry name" value="TRANSCRIPTION FACTOR TGAL8"/>
    <property type="match status" value="1"/>
</dbReference>
<dbReference type="Pfam" id="PF00170">
    <property type="entry name" value="bZIP_1"/>
    <property type="match status" value="1"/>
</dbReference>
<dbReference type="Pfam" id="PF14144">
    <property type="entry name" value="DOG1"/>
    <property type="match status" value="1"/>
</dbReference>
<dbReference type="SMART" id="SM00338">
    <property type="entry name" value="BRLZ"/>
    <property type="match status" value="1"/>
</dbReference>
<dbReference type="SUPFAM" id="SSF57959">
    <property type="entry name" value="Leucine zipper domain"/>
    <property type="match status" value="1"/>
</dbReference>
<dbReference type="PROSITE" id="PS50217">
    <property type="entry name" value="BZIP"/>
    <property type="match status" value="1"/>
</dbReference>
<dbReference type="PROSITE" id="PS00036">
    <property type="entry name" value="BZIP_BASIC"/>
    <property type="match status" value="1"/>
</dbReference>
<dbReference type="PROSITE" id="PS51806">
    <property type="entry name" value="DOG1"/>
    <property type="match status" value="1"/>
</dbReference>
<gene>
    <name evidence="7" type="primary">TGAL8</name>
    <name evidence="11" type="ordered locus">Os06g0614100</name>
    <name evidence="8" type="ordered locus">LOC_Os06g41100</name>
    <name evidence="12" type="ORF">OsJ_21969</name>
    <name evidence="9" type="ORF">P0417G12.29</name>
    <name evidence="10" type="ORF">P0691E09.5</name>
</gene>
<name>TGAL8_ORYSJ</name>
<keyword id="KW-0238">DNA-binding</keyword>
<keyword id="KW-0539">Nucleus</keyword>
<keyword id="KW-0611">Plant defense</keyword>
<keyword id="KW-1185">Reference proteome</keyword>
<keyword id="KW-0804">Transcription</keyword>
<keyword id="KW-0805">Transcription regulation</keyword>
<evidence type="ECO:0000250" key="1">
    <source>
        <dbReference type="UniProtKB" id="Q7X993"/>
    </source>
</evidence>
<evidence type="ECO:0000255" key="2">
    <source>
        <dbReference type="PROSITE-ProRule" id="PRU00978"/>
    </source>
</evidence>
<evidence type="ECO:0000255" key="3">
    <source>
        <dbReference type="PROSITE-ProRule" id="PRU01147"/>
    </source>
</evidence>
<evidence type="ECO:0000256" key="4">
    <source>
        <dbReference type="SAM" id="MobiDB-lite"/>
    </source>
</evidence>
<evidence type="ECO:0000269" key="5">
    <source>
    </source>
</evidence>
<evidence type="ECO:0000303" key="6">
    <source>
    </source>
</evidence>
<evidence type="ECO:0000303" key="7">
    <source>
    </source>
</evidence>
<evidence type="ECO:0000305" key="8"/>
<evidence type="ECO:0000312" key="9">
    <source>
        <dbReference type="EMBL" id="BAD35566.1"/>
    </source>
</evidence>
<evidence type="ECO:0000312" key="10">
    <source>
        <dbReference type="EMBL" id="BAD35911.1"/>
    </source>
</evidence>
<evidence type="ECO:0000312" key="11">
    <source>
        <dbReference type="EMBL" id="BAF19990.1"/>
    </source>
</evidence>
<evidence type="ECO:0000312" key="12">
    <source>
        <dbReference type="EMBL" id="EEE66012.1"/>
    </source>
</evidence>
<feature type="chain" id="PRO_0000437022" description="Transcription factor TGAL8">
    <location>
        <begin position="1"/>
        <end position="451"/>
    </location>
</feature>
<feature type="domain" description="bZIP" evidence="2">
    <location>
        <begin position="147"/>
        <end position="191"/>
    </location>
</feature>
<feature type="domain" description="DOG1" evidence="3">
    <location>
        <begin position="208"/>
        <end position="444"/>
    </location>
</feature>
<feature type="region of interest" description="Disordered" evidence="4">
    <location>
        <begin position="1"/>
        <end position="32"/>
    </location>
</feature>
<feature type="region of interest" description="Disordered" evidence="4">
    <location>
        <begin position="70"/>
        <end position="151"/>
    </location>
</feature>
<feature type="region of interest" description="Basic motif" evidence="2">
    <location>
        <begin position="149"/>
        <end position="169"/>
    </location>
</feature>
<feature type="region of interest" description="Leucine-zipper" evidence="2">
    <location>
        <begin position="175"/>
        <end position="189"/>
    </location>
</feature>
<feature type="compositionally biased region" description="Polar residues" evidence="4">
    <location>
        <begin position="1"/>
        <end position="22"/>
    </location>
</feature>
<feature type="compositionally biased region" description="Basic and acidic residues" evidence="4">
    <location>
        <begin position="141"/>
        <end position="150"/>
    </location>
</feature>